<comment type="function">
    <text evidence="1">Involved in protein export. Acts as a chaperone by maintaining the newly synthesized protein in an open conformation. Functions as a peptidyl-prolyl cis-trans isomerase.</text>
</comment>
<comment type="catalytic activity">
    <reaction evidence="1">
        <text>[protein]-peptidylproline (omega=180) = [protein]-peptidylproline (omega=0)</text>
        <dbReference type="Rhea" id="RHEA:16237"/>
        <dbReference type="Rhea" id="RHEA-COMP:10747"/>
        <dbReference type="Rhea" id="RHEA-COMP:10748"/>
        <dbReference type="ChEBI" id="CHEBI:83833"/>
        <dbReference type="ChEBI" id="CHEBI:83834"/>
        <dbReference type="EC" id="5.2.1.8"/>
    </reaction>
</comment>
<comment type="subcellular location">
    <subcellularLocation>
        <location>Cytoplasm</location>
    </subcellularLocation>
    <text evidence="1">About half TF is bound to the ribosome near the polypeptide exit tunnel while the other half is free in the cytoplasm.</text>
</comment>
<comment type="domain">
    <text evidence="1">Consists of 3 domains; the N-terminus binds the ribosome, the middle domain has PPIase activity, while the C-terminus has intrinsic chaperone activity on its own.</text>
</comment>
<comment type="similarity">
    <text evidence="1">Belongs to the FKBP-type PPIase family. Tig subfamily.</text>
</comment>
<feature type="chain" id="PRO_0000256570" description="Trigger factor">
    <location>
        <begin position="1"/>
        <end position="430"/>
    </location>
</feature>
<feature type="domain" description="PPIase FKBP-type" evidence="1">
    <location>
        <begin position="163"/>
        <end position="248"/>
    </location>
</feature>
<name>TIG_LAWIP</name>
<organism>
    <name type="scientific">Lawsonia intracellularis (strain PHE/MN1-00)</name>
    <dbReference type="NCBI Taxonomy" id="363253"/>
    <lineage>
        <taxon>Bacteria</taxon>
        <taxon>Pseudomonadati</taxon>
        <taxon>Thermodesulfobacteriota</taxon>
        <taxon>Desulfovibrionia</taxon>
        <taxon>Desulfovibrionales</taxon>
        <taxon>Desulfovibrionaceae</taxon>
        <taxon>Lawsonia</taxon>
    </lineage>
</organism>
<accession>Q1MQ80</accession>
<protein>
    <recommendedName>
        <fullName evidence="1">Trigger factor</fullName>
        <shortName evidence="1">TF</shortName>
        <ecNumber evidence="1">5.2.1.8</ecNumber>
    </recommendedName>
    <alternativeName>
        <fullName evidence="1">PPIase</fullName>
    </alternativeName>
</protein>
<gene>
    <name evidence="1" type="primary">tig</name>
    <name type="ordered locus">LI0793</name>
</gene>
<proteinExistence type="inferred from homology"/>
<sequence>MEFVLESISPTKKKLTISLTPDEVNTALDSVIAQYKKDLSLPGFRKGKVPNSVVFKKFSEEITNKATEETLKIYIKEIFQKEHIKPLCNLLTEDTDFIRNESFSSTLTFEVLPEITFPNYEGLEVHQDVVKVTDEEVAELLKNIQLAMAELVDVKEDRSPQNGDVVDVDYKGFENGSPVTDVSGEHFVLTLGQRQALEDFEQLVKTAKVGEEKVGIVNFPRDYAHKGLAGKSIDFHIKLNSIKTSILPELDADFAKKAGYEDIDKLREAAKVQLEIKKKQNAKSNAMKKLINGLLEQVTFDVPETMLETRIERILGDHNIRSQQTVQVQTGEERSESEEELYNNAKVEALAVLRPQIFLMALAEKEKLVVMEQEVERALYNMAIRARQDYNKFRDAYYRSGLVYELQDHLLAEKAMELIYNKANVVEVEQ</sequence>
<reference key="1">
    <citation type="submission" date="2005-11" db="EMBL/GenBank/DDBJ databases">
        <title>The complete genome sequence of Lawsonia intracellularis: the causative agent of proliferative enteropathy.</title>
        <authorList>
            <person name="Kaur K."/>
            <person name="Zhang Q."/>
            <person name="Beckler D."/>
            <person name="Munir S."/>
            <person name="Li L."/>
            <person name="Kinsley K."/>
            <person name="Herron L."/>
            <person name="Peterson A."/>
            <person name="May B."/>
            <person name="Singh S."/>
            <person name="Gebhart C."/>
            <person name="Kapur V."/>
        </authorList>
    </citation>
    <scope>NUCLEOTIDE SEQUENCE [LARGE SCALE GENOMIC DNA]</scope>
    <source>
        <strain>PHE/MN1-00</strain>
    </source>
</reference>
<keyword id="KW-0131">Cell cycle</keyword>
<keyword id="KW-0132">Cell division</keyword>
<keyword id="KW-0143">Chaperone</keyword>
<keyword id="KW-0963">Cytoplasm</keyword>
<keyword id="KW-0413">Isomerase</keyword>
<keyword id="KW-1185">Reference proteome</keyword>
<keyword id="KW-0697">Rotamase</keyword>
<dbReference type="EC" id="5.2.1.8" evidence="1"/>
<dbReference type="EMBL" id="AM180252">
    <property type="protein sequence ID" value="CAJ54847.1"/>
    <property type="molecule type" value="Genomic_DNA"/>
</dbReference>
<dbReference type="RefSeq" id="WP_011526876.1">
    <property type="nucleotide sequence ID" value="NC_008011.1"/>
</dbReference>
<dbReference type="SMR" id="Q1MQ80"/>
<dbReference type="STRING" id="363253.LI0793"/>
<dbReference type="KEGG" id="lip:LI0793"/>
<dbReference type="eggNOG" id="COG0544">
    <property type="taxonomic scope" value="Bacteria"/>
</dbReference>
<dbReference type="HOGENOM" id="CLU_033058_3_1_7"/>
<dbReference type="OrthoDB" id="9767721at2"/>
<dbReference type="Proteomes" id="UP000002430">
    <property type="component" value="Chromosome"/>
</dbReference>
<dbReference type="GO" id="GO:0005737">
    <property type="term" value="C:cytoplasm"/>
    <property type="evidence" value="ECO:0007669"/>
    <property type="project" value="UniProtKB-SubCell"/>
</dbReference>
<dbReference type="GO" id="GO:0003755">
    <property type="term" value="F:peptidyl-prolyl cis-trans isomerase activity"/>
    <property type="evidence" value="ECO:0007669"/>
    <property type="project" value="UniProtKB-UniRule"/>
</dbReference>
<dbReference type="GO" id="GO:0044183">
    <property type="term" value="F:protein folding chaperone"/>
    <property type="evidence" value="ECO:0007669"/>
    <property type="project" value="TreeGrafter"/>
</dbReference>
<dbReference type="GO" id="GO:0043022">
    <property type="term" value="F:ribosome binding"/>
    <property type="evidence" value="ECO:0007669"/>
    <property type="project" value="TreeGrafter"/>
</dbReference>
<dbReference type="GO" id="GO:0051083">
    <property type="term" value="P:'de novo' cotranslational protein folding"/>
    <property type="evidence" value="ECO:0007669"/>
    <property type="project" value="TreeGrafter"/>
</dbReference>
<dbReference type="GO" id="GO:0051301">
    <property type="term" value="P:cell division"/>
    <property type="evidence" value="ECO:0007669"/>
    <property type="project" value="UniProtKB-KW"/>
</dbReference>
<dbReference type="GO" id="GO:0061077">
    <property type="term" value="P:chaperone-mediated protein folding"/>
    <property type="evidence" value="ECO:0007669"/>
    <property type="project" value="TreeGrafter"/>
</dbReference>
<dbReference type="GO" id="GO:0015031">
    <property type="term" value="P:protein transport"/>
    <property type="evidence" value="ECO:0007669"/>
    <property type="project" value="UniProtKB-UniRule"/>
</dbReference>
<dbReference type="GO" id="GO:0043335">
    <property type="term" value="P:protein unfolding"/>
    <property type="evidence" value="ECO:0007669"/>
    <property type="project" value="TreeGrafter"/>
</dbReference>
<dbReference type="Gene3D" id="3.10.50.40">
    <property type="match status" value="1"/>
</dbReference>
<dbReference type="Gene3D" id="3.30.70.1050">
    <property type="entry name" value="Trigger factor ribosome-binding domain"/>
    <property type="match status" value="1"/>
</dbReference>
<dbReference type="Gene3D" id="1.10.3120.10">
    <property type="entry name" value="Trigger factor, C-terminal domain"/>
    <property type="match status" value="1"/>
</dbReference>
<dbReference type="HAMAP" id="MF_00303">
    <property type="entry name" value="Trigger_factor_Tig"/>
    <property type="match status" value="1"/>
</dbReference>
<dbReference type="InterPro" id="IPR046357">
    <property type="entry name" value="PPIase_dom_sf"/>
</dbReference>
<dbReference type="InterPro" id="IPR001179">
    <property type="entry name" value="PPIase_FKBP_dom"/>
</dbReference>
<dbReference type="InterPro" id="IPR005215">
    <property type="entry name" value="Trig_fac"/>
</dbReference>
<dbReference type="InterPro" id="IPR008880">
    <property type="entry name" value="Trigger_fac_C"/>
</dbReference>
<dbReference type="InterPro" id="IPR037041">
    <property type="entry name" value="Trigger_fac_C_sf"/>
</dbReference>
<dbReference type="InterPro" id="IPR008881">
    <property type="entry name" value="Trigger_fac_ribosome-bd_bac"/>
</dbReference>
<dbReference type="InterPro" id="IPR036611">
    <property type="entry name" value="Trigger_fac_ribosome-bd_sf"/>
</dbReference>
<dbReference type="InterPro" id="IPR027304">
    <property type="entry name" value="Trigger_fact/SurA_dom_sf"/>
</dbReference>
<dbReference type="NCBIfam" id="TIGR00115">
    <property type="entry name" value="tig"/>
    <property type="match status" value="1"/>
</dbReference>
<dbReference type="PANTHER" id="PTHR30560">
    <property type="entry name" value="TRIGGER FACTOR CHAPERONE AND PEPTIDYL-PROLYL CIS/TRANS ISOMERASE"/>
    <property type="match status" value="1"/>
</dbReference>
<dbReference type="PANTHER" id="PTHR30560:SF3">
    <property type="entry name" value="TRIGGER FACTOR-LIKE PROTEIN TIG, CHLOROPLASTIC"/>
    <property type="match status" value="1"/>
</dbReference>
<dbReference type="Pfam" id="PF00254">
    <property type="entry name" value="FKBP_C"/>
    <property type="match status" value="1"/>
</dbReference>
<dbReference type="Pfam" id="PF05698">
    <property type="entry name" value="Trigger_C"/>
    <property type="match status" value="1"/>
</dbReference>
<dbReference type="Pfam" id="PF05697">
    <property type="entry name" value="Trigger_N"/>
    <property type="match status" value="1"/>
</dbReference>
<dbReference type="PIRSF" id="PIRSF003095">
    <property type="entry name" value="Trigger_factor"/>
    <property type="match status" value="1"/>
</dbReference>
<dbReference type="SUPFAM" id="SSF54534">
    <property type="entry name" value="FKBP-like"/>
    <property type="match status" value="1"/>
</dbReference>
<dbReference type="SUPFAM" id="SSF109998">
    <property type="entry name" value="Triger factor/SurA peptide-binding domain-like"/>
    <property type="match status" value="1"/>
</dbReference>
<dbReference type="SUPFAM" id="SSF102735">
    <property type="entry name" value="Trigger factor ribosome-binding domain"/>
    <property type="match status" value="1"/>
</dbReference>
<dbReference type="PROSITE" id="PS50059">
    <property type="entry name" value="FKBP_PPIASE"/>
    <property type="match status" value="1"/>
</dbReference>
<evidence type="ECO:0000255" key="1">
    <source>
        <dbReference type="HAMAP-Rule" id="MF_00303"/>
    </source>
</evidence>